<accession>Q73YK7</accession>
<dbReference type="EC" id="2.4.2.21" evidence="1"/>
<dbReference type="EMBL" id="AE016958">
    <property type="protein sequence ID" value="AAS04265.1"/>
    <property type="molecule type" value="Genomic_DNA"/>
</dbReference>
<dbReference type="RefSeq" id="WP_003872278.1">
    <property type="nucleotide sequence ID" value="NC_002944.2"/>
</dbReference>
<dbReference type="SMR" id="Q73YK7"/>
<dbReference type="STRING" id="262316.MAP_1948"/>
<dbReference type="KEGG" id="mpa:MAP_1948"/>
<dbReference type="eggNOG" id="COG2038">
    <property type="taxonomic scope" value="Bacteria"/>
</dbReference>
<dbReference type="HOGENOM" id="CLU_002982_0_2_11"/>
<dbReference type="UniPathway" id="UPA00061">
    <property type="reaction ID" value="UER00516"/>
</dbReference>
<dbReference type="Proteomes" id="UP000000580">
    <property type="component" value="Chromosome"/>
</dbReference>
<dbReference type="GO" id="GO:0008939">
    <property type="term" value="F:nicotinate-nucleotide-dimethylbenzimidazole phosphoribosyltransferase activity"/>
    <property type="evidence" value="ECO:0007669"/>
    <property type="project" value="UniProtKB-UniRule"/>
</dbReference>
<dbReference type="GO" id="GO:0009236">
    <property type="term" value="P:cobalamin biosynthetic process"/>
    <property type="evidence" value="ECO:0007669"/>
    <property type="project" value="UniProtKB-KW"/>
</dbReference>
<dbReference type="CDD" id="cd02439">
    <property type="entry name" value="DMB-PRT_CobT"/>
    <property type="match status" value="1"/>
</dbReference>
<dbReference type="FunFam" id="3.40.50.10210:FF:000001">
    <property type="entry name" value="Nicotinate-nucleotide--dimethylbenzimidazole phosphoribosyltransferase"/>
    <property type="match status" value="1"/>
</dbReference>
<dbReference type="Gene3D" id="1.10.1610.10">
    <property type="match status" value="1"/>
</dbReference>
<dbReference type="Gene3D" id="3.40.50.10210">
    <property type="match status" value="1"/>
</dbReference>
<dbReference type="HAMAP" id="MF_00230">
    <property type="entry name" value="CobT"/>
    <property type="match status" value="1"/>
</dbReference>
<dbReference type="InterPro" id="IPR003200">
    <property type="entry name" value="Nict_dMeBzImd_PRibTrfase"/>
</dbReference>
<dbReference type="InterPro" id="IPR017846">
    <property type="entry name" value="Nict_dMeBzImd_PRibTrfase_bact"/>
</dbReference>
<dbReference type="InterPro" id="IPR023195">
    <property type="entry name" value="Nict_dMeBzImd_PRibTrfase_N"/>
</dbReference>
<dbReference type="InterPro" id="IPR036087">
    <property type="entry name" value="Nict_dMeBzImd_PRibTrfase_sf"/>
</dbReference>
<dbReference type="NCBIfam" id="TIGR03160">
    <property type="entry name" value="cobT_DBIPRT"/>
    <property type="match status" value="1"/>
</dbReference>
<dbReference type="NCBIfam" id="NF000996">
    <property type="entry name" value="PRK00105.1"/>
    <property type="match status" value="1"/>
</dbReference>
<dbReference type="PANTHER" id="PTHR43463">
    <property type="entry name" value="NICOTINATE-NUCLEOTIDE--DIMETHYLBENZIMIDAZOLE PHOSPHORIBOSYLTRANSFERASE"/>
    <property type="match status" value="1"/>
</dbReference>
<dbReference type="PANTHER" id="PTHR43463:SF1">
    <property type="entry name" value="NICOTINATE-NUCLEOTIDE--DIMETHYLBENZIMIDAZOLE PHOSPHORIBOSYLTRANSFERASE"/>
    <property type="match status" value="1"/>
</dbReference>
<dbReference type="Pfam" id="PF02277">
    <property type="entry name" value="DBI_PRT"/>
    <property type="match status" value="1"/>
</dbReference>
<dbReference type="SUPFAM" id="SSF52733">
    <property type="entry name" value="Nicotinate mononucleotide:5,6-dimethylbenzimidazole phosphoribosyltransferase (CobT)"/>
    <property type="match status" value="1"/>
</dbReference>
<evidence type="ECO:0000255" key="1">
    <source>
        <dbReference type="HAMAP-Rule" id="MF_00230"/>
    </source>
</evidence>
<evidence type="ECO:0000256" key="2">
    <source>
        <dbReference type="SAM" id="MobiDB-lite"/>
    </source>
</evidence>
<sequence>MEFATVSPPDPGTAAAARARQDTLTKPRGALGRLEDLSVWIAACQGQCPPRQFERARVVVFAGDHGVARCGVSAYPPEVTAQMVANFDAGGAAINALAGVAGASVRVADLAVDADPPDDRIGAHKVRRGSGDITVQDALTAEETERALSAGAAIADEEVDAGADLLIAGDMGIGNTTAAAVLVAALTNVEPVVAVGFGTGIDDAGWARKTAAVRDALFRARRVLPDPVALLRCAGGADLAALAGFCAQAAVRRTPLLLDGMAVTAAALVAEHLAPGARLWWQAGHRSTEPGHALALTALDLEPILDLRMRLGEGTGAALALPIVRAAVAALSSMATFAQAGVSDPSAHP</sequence>
<feature type="chain" id="PRO_1000021604" description="Nicotinate-nucleotide--dimethylbenzimidazole phosphoribosyltransferase">
    <location>
        <begin position="1"/>
        <end position="349"/>
    </location>
</feature>
<feature type="region of interest" description="Disordered" evidence="2">
    <location>
        <begin position="1"/>
        <end position="20"/>
    </location>
</feature>
<feature type="active site" description="Proton acceptor" evidence="1">
    <location>
        <position position="313"/>
    </location>
</feature>
<proteinExistence type="inferred from homology"/>
<organism>
    <name type="scientific">Mycolicibacterium paratuberculosis (strain ATCC BAA-968 / K-10)</name>
    <name type="common">Mycobacterium paratuberculosis</name>
    <dbReference type="NCBI Taxonomy" id="262316"/>
    <lineage>
        <taxon>Bacteria</taxon>
        <taxon>Bacillati</taxon>
        <taxon>Actinomycetota</taxon>
        <taxon>Actinomycetes</taxon>
        <taxon>Mycobacteriales</taxon>
        <taxon>Mycobacteriaceae</taxon>
        <taxon>Mycobacterium</taxon>
        <taxon>Mycobacterium avium complex (MAC)</taxon>
    </lineage>
</organism>
<gene>
    <name evidence="1" type="primary">cobT</name>
    <name type="ordered locus">MAP_1948</name>
</gene>
<name>COBT_MYCPA</name>
<comment type="function">
    <text evidence="1">Catalyzes the synthesis of alpha-ribazole-5'-phosphate from nicotinate mononucleotide (NAMN) and 5,6-dimethylbenzimidazole (DMB).</text>
</comment>
<comment type="catalytic activity">
    <reaction evidence="1">
        <text>5,6-dimethylbenzimidazole + nicotinate beta-D-ribonucleotide = alpha-ribazole 5'-phosphate + nicotinate + H(+)</text>
        <dbReference type="Rhea" id="RHEA:11196"/>
        <dbReference type="ChEBI" id="CHEBI:15378"/>
        <dbReference type="ChEBI" id="CHEBI:15890"/>
        <dbReference type="ChEBI" id="CHEBI:32544"/>
        <dbReference type="ChEBI" id="CHEBI:57502"/>
        <dbReference type="ChEBI" id="CHEBI:57918"/>
        <dbReference type="EC" id="2.4.2.21"/>
    </reaction>
</comment>
<comment type="pathway">
    <text evidence="1">Nucleoside biosynthesis; alpha-ribazole biosynthesis; alpha-ribazole from 5,6-dimethylbenzimidazole: step 1/2.</text>
</comment>
<comment type="similarity">
    <text evidence="1">Belongs to the CobT family.</text>
</comment>
<reference key="1">
    <citation type="journal article" date="2005" name="Proc. Natl. Acad. Sci. U.S.A.">
        <title>The complete genome sequence of Mycobacterium avium subspecies paratuberculosis.</title>
        <authorList>
            <person name="Li L."/>
            <person name="Bannantine J.P."/>
            <person name="Zhang Q."/>
            <person name="Amonsin A."/>
            <person name="May B.J."/>
            <person name="Alt D."/>
            <person name="Banerji N."/>
            <person name="Kanjilal S."/>
            <person name="Kapur V."/>
        </authorList>
    </citation>
    <scope>NUCLEOTIDE SEQUENCE [LARGE SCALE GENOMIC DNA]</scope>
    <source>
        <strain>ATCC BAA-968 / K-10</strain>
    </source>
</reference>
<protein>
    <recommendedName>
        <fullName evidence="1">Nicotinate-nucleotide--dimethylbenzimidazole phosphoribosyltransferase</fullName>
        <shortName evidence="1">NN:DBI PRT</shortName>
        <ecNumber evidence="1">2.4.2.21</ecNumber>
    </recommendedName>
    <alternativeName>
        <fullName evidence="1">N(1)-alpha-phosphoribosyltransferase</fullName>
    </alternativeName>
</protein>
<keyword id="KW-0169">Cobalamin biosynthesis</keyword>
<keyword id="KW-0328">Glycosyltransferase</keyword>
<keyword id="KW-1185">Reference proteome</keyword>
<keyword id="KW-0808">Transferase</keyword>